<gene>
    <name type="primary">Noa1</name>
    <name type="ORF">MNCb-4931</name>
</gene>
<protein>
    <recommendedName>
        <fullName>Nitric oxide-associated protein 1</fullName>
    </recommendedName>
</protein>
<sequence length="693" mass="77379">MLPARLACGLLCGLRRGPAPAAACYGPARWLLEGKCEVPIRQRASSLGRRVPPSSTATEDYAEGPDTEERFLFPEYVPERTPEEQVRELQELRELQQLQQEKERERLQQREERLQQKLRAGFRTLPVPEFPDASVPPSGIYCSGCGAELHCQHPGLPGYLPEEKFRDAAQAEGGPARTVCQRCWLLVHHGRALRLQVSRDQYLELVSAALRRPGPALVLYMVNLLDLPDALLPDLPKLVGPKQLIVLGNKVDLLPQDAPGYLKRLRKRLWDDCIRAGLVVAPGHQGPQYPAGDEPLEEIKNQNPSSRSRTVVKDVRLISAKTGYGVEEMISALQRSWRYRGDVYLVGTTNAGKSTLFNTLLESDYCTAKGSEAIDRATISPWPGTTLNLLKFPICNPTPYRMFKRQRRLQEDATKAEEDLSEEEQSQLNQLKKHGYIVGRVGRTFSYSREQDEVPFEFDADSLAFDMGSEPVVSVCKSTKQIELTPEDVKDAHWFYDTPGITKESCILNLLTEKEINTVLPTHSIIPRTFVLKPGMVLFLGGIARIDFLQGNQSAWFTVVASNFLPVHITSLDKADALYEKHAGHELLLVPMGGKERMAQFPPLVAEDITLKGGGKFEAVADIKFSSAGWVAVTPYSEGTLHLRGHTPEGTALTVHPPVLPYIVNVKGQRMKKSVAYKTKKPPSLVHNLKKHR</sequence>
<keyword id="KW-0053">Apoptosis</keyword>
<keyword id="KW-0342">GTP-binding</keyword>
<keyword id="KW-0472">Membrane</keyword>
<keyword id="KW-0496">Mitochondrion</keyword>
<keyword id="KW-0999">Mitochondrion inner membrane</keyword>
<keyword id="KW-0547">Nucleotide-binding</keyword>
<keyword id="KW-0597">Phosphoprotein</keyword>
<keyword id="KW-1185">Reference proteome</keyword>
<comment type="function">
    <text evidence="5 6">Involved in regulation of mitochondrial protein translation and respiration. Plays a role in mitochondria-mediated cell death. May act as a scaffolding protein or stabilizer of respiratory chain supercomplexes. Binds GTP.</text>
</comment>
<comment type="subunit">
    <text evidence="5">Homodimer or multimer. Interacts with mitochondrial complex I, DAP3, MRPL12 and MRPS27.</text>
</comment>
<comment type="subcellular location">
    <subcellularLocation>
        <location evidence="4 5">Mitochondrion inner membrane</location>
        <topology evidence="4 5">Peripheral membrane protein</topology>
        <orientation evidence="4 5">Matrix side</orientation>
    </subcellularLocation>
</comment>
<comment type="tissue specificity">
    <text evidence="4">Expressed in tissues associated with high mitochondria content including testes, heart, liver, brain and thymus. Also expressed in various bone cell lines.</text>
</comment>
<comment type="developmental stage">
    <text evidence="4">At 10.5 dpc, weak but widespread expression. By 12.5 dpc prominently expressed in the liver and also detected in developing CNS and dorsal root ganglia. At 14.5 dpc, expression is intensified in bone.</text>
</comment>
<comment type="disruption phenotype">
    <text evidence="6">Mice display mid-gestation lethality associated with a severe developmental defect of the embryo and trophoblast. Primary embryonic fibroblasts isolated from mutant 9.5 dpc embryos show deficient mitochondrial synthesis and a global defect of oxidative phosphorylation.</text>
</comment>
<comment type="similarity">
    <text evidence="2">Belongs to the TRAFAC class YlqF/YawG GTPase family. NOA1 subfamily.</text>
</comment>
<name>NOA1_MOUSE</name>
<dbReference type="EMBL" id="AB041537">
    <property type="protein sequence ID" value="BAA95022.1"/>
    <property type="molecule type" value="mRNA"/>
</dbReference>
<dbReference type="EMBL" id="AK017793">
    <property type="protein sequence ID" value="BAB30935.1"/>
    <property type="molecule type" value="mRNA"/>
</dbReference>
<dbReference type="EMBL" id="AK157246">
    <property type="protein sequence ID" value="BAE34011.1"/>
    <property type="molecule type" value="mRNA"/>
</dbReference>
<dbReference type="EMBL" id="AK172681">
    <property type="protein sequence ID" value="BAE43128.1"/>
    <property type="molecule type" value="mRNA"/>
</dbReference>
<dbReference type="EMBL" id="BC005689">
    <property type="protein sequence ID" value="AAH05689.1"/>
    <property type="molecule type" value="mRNA"/>
</dbReference>
<dbReference type="EMBL" id="BC017154">
    <property type="protein sequence ID" value="AAH17154.1"/>
    <property type="molecule type" value="mRNA"/>
</dbReference>
<dbReference type="CCDS" id="CCDS19373.1"/>
<dbReference type="RefSeq" id="NP_062810.1">
    <property type="nucleotide sequence ID" value="NM_019836.4"/>
</dbReference>
<dbReference type="SMR" id="Q9JJG9"/>
<dbReference type="BioGRID" id="207962">
    <property type="interactions" value="3"/>
</dbReference>
<dbReference type="FunCoup" id="Q9JJG9">
    <property type="interactions" value="3171"/>
</dbReference>
<dbReference type="STRING" id="10090.ENSMUSP00000045948"/>
<dbReference type="iPTMnet" id="Q9JJG9"/>
<dbReference type="PhosphoSitePlus" id="Q9JJG9"/>
<dbReference type="jPOST" id="Q9JJG9"/>
<dbReference type="PaxDb" id="10090-ENSMUSP00000045948"/>
<dbReference type="PeptideAtlas" id="Q9JJG9"/>
<dbReference type="ProteomicsDB" id="252914"/>
<dbReference type="Pumba" id="Q9JJG9"/>
<dbReference type="Antibodypedia" id="44140">
    <property type="antibodies" value="117 antibodies from 23 providers"/>
</dbReference>
<dbReference type="Ensembl" id="ENSMUST00000047860.9">
    <property type="protein sequence ID" value="ENSMUSP00000045948.9"/>
    <property type="gene ID" value="ENSMUSG00000036285.11"/>
</dbReference>
<dbReference type="GeneID" id="56412"/>
<dbReference type="KEGG" id="mmu:56412"/>
<dbReference type="UCSC" id="uc008xwc.2">
    <property type="organism name" value="mouse"/>
</dbReference>
<dbReference type="AGR" id="MGI:1914306"/>
<dbReference type="CTD" id="84273"/>
<dbReference type="MGI" id="MGI:1914306">
    <property type="gene designation" value="Noa1"/>
</dbReference>
<dbReference type="VEuPathDB" id="HostDB:ENSMUSG00000036285"/>
<dbReference type="eggNOG" id="KOG1249">
    <property type="taxonomic scope" value="Eukaryota"/>
</dbReference>
<dbReference type="GeneTree" id="ENSGT00390000001695"/>
<dbReference type="HOGENOM" id="CLU_014195_2_0_1"/>
<dbReference type="InParanoid" id="Q9JJG9"/>
<dbReference type="OMA" id="LGCTNVG"/>
<dbReference type="OrthoDB" id="1696305at2759"/>
<dbReference type="PhylomeDB" id="Q9JJG9"/>
<dbReference type="TreeFam" id="TF314460"/>
<dbReference type="BioGRID-ORCS" id="56412">
    <property type="hits" value="12 hits in 77 CRISPR screens"/>
</dbReference>
<dbReference type="ChiTaRS" id="Noa1">
    <property type="organism name" value="mouse"/>
</dbReference>
<dbReference type="PRO" id="PR:Q9JJG9"/>
<dbReference type="Proteomes" id="UP000000589">
    <property type="component" value="Chromosome 5"/>
</dbReference>
<dbReference type="RNAct" id="Q9JJG9">
    <property type="molecule type" value="protein"/>
</dbReference>
<dbReference type="Bgee" id="ENSMUSG00000036285">
    <property type="expression patterns" value="Expressed in ankle joint and 284 other cell types or tissues"/>
</dbReference>
<dbReference type="GO" id="GO:0099617">
    <property type="term" value="C:matrix side of mitochondrial inner membrane"/>
    <property type="evidence" value="ECO:0007669"/>
    <property type="project" value="Ensembl"/>
</dbReference>
<dbReference type="GO" id="GO:0005743">
    <property type="term" value="C:mitochondrial inner membrane"/>
    <property type="evidence" value="ECO:0000314"/>
    <property type="project" value="MGI"/>
</dbReference>
<dbReference type="GO" id="GO:0005739">
    <property type="term" value="C:mitochondrion"/>
    <property type="evidence" value="ECO:0000314"/>
    <property type="project" value="UniProtKB"/>
</dbReference>
<dbReference type="GO" id="GO:0005525">
    <property type="term" value="F:GTP binding"/>
    <property type="evidence" value="ECO:0000250"/>
    <property type="project" value="UniProtKB"/>
</dbReference>
<dbReference type="GO" id="GO:0006915">
    <property type="term" value="P:apoptotic process"/>
    <property type="evidence" value="ECO:0007669"/>
    <property type="project" value="UniProtKB-KW"/>
</dbReference>
<dbReference type="GO" id="GO:0061668">
    <property type="term" value="P:mitochondrial ribosome assembly"/>
    <property type="evidence" value="ECO:0000315"/>
    <property type="project" value="UniProtKB"/>
</dbReference>
<dbReference type="GO" id="GO:0007005">
    <property type="term" value="P:mitochondrion organization"/>
    <property type="evidence" value="ECO:0007669"/>
    <property type="project" value="Ensembl"/>
</dbReference>
<dbReference type="CDD" id="cd01855">
    <property type="entry name" value="YqeH"/>
    <property type="match status" value="1"/>
</dbReference>
<dbReference type="Gene3D" id="3.40.50.300">
    <property type="entry name" value="P-loop containing nucleotide triphosphate hydrolases"/>
    <property type="match status" value="1"/>
</dbReference>
<dbReference type="InterPro" id="IPR030378">
    <property type="entry name" value="G_CP_dom"/>
</dbReference>
<dbReference type="InterPro" id="IPR006073">
    <property type="entry name" value="GTP-bd"/>
</dbReference>
<dbReference type="InterPro" id="IPR052807">
    <property type="entry name" value="Mito_transl_resp_regulator"/>
</dbReference>
<dbReference type="InterPro" id="IPR048422">
    <property type="entry name" value="NOA1/YqeH-like_C"/>
</dbReference>
<dbReference type="InterPro" id="IPR027417">
    <property type="entry name" value="P-loop_NTPase"/>
</dbReference>
<dbReference type="PANTHER" id="PTHR46406">
    <property type="entry name" value="NITRIC OXIDE-ASSOCIATED PROTEIN 1"/>
    <property type="match status" value="1"/>
</dbReference>
<dbReference type="PANTHER" id="PTHR46406:SF1">
    <property type="entry name" value="NITRIC OXIDE-ASSOCIATED PROTEIN 1"/>
    <property type="match status" value="1"/>
</dbReference>
<dbReference type="Pfam" id="PF01926">
    <property type="entry name" value="MMR_HSR1"/>
    <property type="match status" value="1"/>
</dbReference>
<dbReference type="Pfam" id="PF21516">
    <property type="entry name" value="YqeH-like_C"/>
    <property type="match status" value="1"/>
</dbReference>
<dbReference type="SUPFAM" id="SSF52540">
    <property type="entry name" value="P-loop containing nucleoside triphosphate hydrolases"/>
    <property type="match status" value="1"/>
</dbReference>
<dbReference type="PROSITE" id="PS51721">
    <property type="entry name" value="G_CP"/>
    <property type="match status" value="1"/>
</dbReference>
<feature type="chain" id="PRO_0000232511" description="Nitric oxide-associated protein 1">
    <location>
        <begin position="1"/>
        <end position="693"/>
    </location>
</feature>
<feature type="domain" description="CP-type G" evidence="2">
    <location>
        <begin position="203"/>
        <end position="504"/>
    </location>
</feature>
<feature type="region of interest" description="Disordered" evidence="3">
    <location>
        <begin position="43"/>
        <end position="67"/>
    </location>
</feature>
<feature type="region of interest" description="Disordered" evidence="3">
    <location>
        <begin position="286"/>
        <end position="307"/>
    </location>
</feature>
<feature type="modified residue" description="Phosphotyrosine" evidence="1">
    <location>
        <position position="76"/>
    </location>
</feature>
<feature type="mutagenesis site" description="Loss of ability to regulate activity of mitochondrial respiratory chain complexes." evidence="5">
    <original>K</original>
    <variation>R</variation>
    <location>
        <position position="353"/>
    </location>
</feature>
<feature type="sequence conflict" description="In Ref. 2; BAE43128." evidence="7" ref="2">
    <original>C</original>
    <variation>R</variation>
    <location>
        <position position="8"/>
    </location>
</feature>
<feature type="sequence conflict" description="In Ref. 2; BAE43128." evidence="7" ref="2">
    <original>P</original>
    <variation>T</variation>
    <location>
        <position position="259"/>
    </location>
</feature>
<feature type="sequence conflict" description="In Ref. 2; BAE34011." evidence="7" ref="2">
    <original>N</original>
    <variation>S</variation>
    <location>
        <position position="563"/>
    </location>
</feature>
<proteinExistence type="evidence at protein level"/>
<evidence type="ECO:0000250" key="1">
    <source>
        <dbReference type="UniProtKB" id="Q8NC60"/>
    </source>
</evidence>
<evidence type="ECO:0000255" key="2">
    <source>
        <dbReference type="PROSITE-ProRule" id="PRU01058"/>
    </source>
</evidence>
<evidence type="ECO:0000256" key="3">
    <source>
        <dbReference type="SAM" id="MobiDB-lite"/>
    </source>
</evidence>
<evidence type="ECO:0000269" key="4">
    <source>
    </source>
</evidence>
<evidence type="ECO:0000269" key="5">
    <source>
    </source>
</evidence>
<evidence type="ECO:0000269" key="6">
    <source>
    </source>
</evidence>
<evidence type="ECO:0000305" key="7"/>
<organism>
    <name type="scientific">Mus musculus</name>
    <name type="common">Mouse</name>
    <dbReference type="NCBI Taxonomy" id="10090"/>
    <lineage>
        <taxon>Eukaryota</taxon>
        <taxon>Metazoa</taxon>
        <taxon>Chordata</taxon>
        <taxon>Craniata</taxon>
        <taxon>Vertebrata</taxon>
        <taxon>Euteleostomi</taxon>
        <taxon>Mammalia</taxon>
        <taxon>Eutheria</taxon>
        <taxon>Euarchontoglires</taxon>
        <taxon>Glires</taxon>
        <taxon>Rodentia</taxon>
        <taxon>Myomorpha</taxon>
        <taxon>Muroidea</taxon>
        <taxon>Muridae</taxon>
        <taxon>Murinae</taxon>
        <taxon>Mus</taxon>
        <taxon>Mus</taxon>
    </lineage>
</organism>
<accession>Q9JJG9</accession>
<accession>Q3T996</accession>
<accession>Q3U044</accession>
<accession>Q99JU4</accession>
<reference key="1">
    <citation type="submission" date="2000-04" db="EMBL/GenBank/DDBJ databases">
        <title>Isolation of full-length cDNA clones from mouse brain cDNA library made by oligo-capping method.</title>
        <authorList>
            <person name="Osada N."/>
            <person name="Kusuda J."/>
            <person name="Tanuma R."/>
            <person name="Ito A."/>
            <person name="Hirata M."/>
            <person name="Sugano S."/>
            <person name="Hashimoto K."/>
        </authorList>
    </citation>
    <scope>NUCLEOTIDE SEQUENCE [LARGE SCALE MRNA]</scope>
    <source>
        <strain>C57BL/6J</strain>
        <tissue>Brain</tissue>
    </source>
</reference>
<reference key="2">
    <citation type="journal article" date="2005" name="Science">
        <title>The transcriptional landscape of the mammalian genome.</title>
        <authorList>
            <person name="Carninci P."/>
            <person name="Kasukawa T."/>
            <person name="Katayama S."/>
            <person name="Gough J."/>
            <person name="Frith M.C."/>
            <person name="Maeda N."/>
            <person name="Oyama R."/>
            <person name="Ravasi T."/>
            <person name="Lenhard B."/>
            <person name="Wells C."/>
            <person name="Kodzius R."/>
            <person name="Shimokawa K."/>
            <person name="Bajic V.B."/>
            <person name="Brenner S.E."/>
            <person name="Batalov S."/>
            <person name="Forrest A.R."/>
            <person name="Zavolan M."/>
            <person name="Davis M.J."/>
            <person name="Wilming L.G."/>
            <person name="Aidinis V."/>
            <person name="Allen J.E."/>
            <person name="Ambesi-Impiombato A."/>
            <person name="Apweiler R."/>
            <person name="Aturaliya R.N."/>
            <person name="Bailey T.L."/>
            <person name="Bansal M."/>
            <person name="Baxter L."/>
            <person name="Beisel K.W."/>
            <person name="Bersano T."/>
            <person name="Bono H."/>
            <person name="Chalk A.M."/>
            <person name="Chiu K.P."/>
            <person name="Choudhary V."/>
            <person name="Christoffels A."/>
            <person name="Clutterbuck D.R."/>
            <person name="Crowe M.L."/>
            <person name="Dalla E."/>
            <person name="Dalrymple B.P."/>
            <person name="de Bono B."/>
            <person name="Della Gatta G."/>
            <person name="di Bernardo D."/>
            <person name="Down T."/>
            <person name="Engstrom P."/>
            <person name="Fagiolini M."/>
            <person name="Faulkner G."/>
            <person name="Fletcher C.F."/>
            <person name="Fukushima T."/>
            <person name="Furuno M."/>
            <person name="Futaki S."/>
            <person name="Gariboldi M."/>
            <person name="Georgii-Hemming P."/>
            <person name="Gingeras T.R."/>
            <person name="Gojobori T."/>
            <person name="Green R.E."/>
            <person name="Gustincich S."/>
            <person name="Harbers M."/>
            <person name="Hayashi Y."/>
            <person name="Hensch T.K."/>
            <person name="Hirokawa N."/>
            <person name="Hill D."/>
            <person name="Huminiecki L."/>
            <person name="Iacono M."/>
            <person name="Ikeo K."/>
            <person name="Iwama A."/>
            <person name="Ishikawa T."/>
            <person name="Jakt M."/>
            <person name="Kanapin A."/>
            <person name="Katoh M."/>
            <person name="Kawasawa Y."/>
            <person name="Kelso J."/>
            <person name="Kitamura H."/>
            <person name="Kitano H."/>
            <person name="Kollias G."/>
            <person name="Krishnan S.P."/>
            <person name="Kruger A."/>
            <person name="Kummerfeld S.K."/>
            <person name="Kurochkin I.V."/>
            <person name="Lareau L.F."/>
            <person name="Lazarevic D."/>
            <person name="Lipovich L."/>
            <person name="Liu J."/>
            <person name="Liuni S."/>
            <person name="McWilliam S."/>
            <person name="Madan Babu M."/>
            <person name="Madera M."/>
            <person name="Marchionni L."/>
            <person name="Matsuda H."/>
            <person name="Matsuzawa S."/>
            <person name="Miki H."/>
            <person name="Mignone F."/>
            <person name="Miyake S."/>
            <person name="Morris K."/>
            <person name="Mottagui-Tabar S."/>
            <person name="Mulder N."/>
            <person name="Nakano N."/>
            <person name="Nakauchi H."/>
            <person name="Ng P."/>
            <person name="Nilsson R."/>
            <person name="Nishiguchi S."/>
            <person name="Nishikawa S."/>
            <person name="Nori F."/>
            <person name="Ohara O."/>
            <person name="Okazaki Y."/>
            <person name="Orlando V."/>
            <person name="Pang K.C."/>
            <person name="Pavan W.J."/>
            <person name="Pavesi G."/>
            <person name="Pesole G."/>
            <person name="Petrovsky N."/>
            <person name="Piazza S."/>
            <person name="Reed J."/>
            <person name="Reid J.F."/>
            <person name="Ring B.Z."/>
            <person name="Ringwald M."/>
            <person name="Rost B."/>
            <person name="Ruan Y."/>
            <person name="Salzberg S.L."/>
            <person name="Sandelin A."/>
            <person name="Schneider C."/>
            <person name="Schoenbach C."/>
            <person name="Sekiguchi K."/>
            <person name="Semple C.A."/>
            <person name="Seno S."/>
            <person name="Sessa L."/>
            <person name="Sheng Y."/>
            <person name="Shibata Y."/>
            <person name="Shimada H."/>
            <person name="Shimada K."/>
            <person name="Silva D."/>
            <person name="Sinclair B."/>
            <person name="Sperling S."/>
            <person name="Stupka E."/>
            <person name="Sugiura K."/>
            <person name="Sultana R."/>
            <person name="Takenaka Y."/>
            <person name="Taki K."/>
            <person name="Tammoja K."/>
            <person name="Tan S.L."/>
            <person name="Tang S."/>
            <person name="Taylor M.S."/>
            <person name="Tegner J."/>
            <person name="Teichmann S.A."/>
            <person name="Ueda H.R."/>
            <person name="van Nimwegen E."/>
            <person name="Verardo R."/>
            <person name="Wei C.L."/>
            <person name="Yagi K."/>
            <person name="Yamanishi H."/>
            <person name="Zabarovsky E."/>
            <person name="Zhu S."/>
            <person name="Zimmer A."/>
            <person name="Hide W."/>
            <person name="Bult C."/>
            <person name="Grimmond S.M."/>
            <person name="Teasdale R.D."/>
            <person name="Liu E.T."/>
            <person name="Brusic V."/>
            <person name="Quackenbush J."/>
            <person name="Wahlestedt C."/>
            <person name="Mattick J.S."/>
            <person name="Hume D.A."/>
            <person name="Kai C."/>
            <person name="Sasaki D."/>
            <person name="Tomaru Y."/>
            <person name="Fukuda S."/>
            <person name="Kanamori-Katayama M."/>
            <person name="Suzuki M."/>
            <person name="Aoki J."/>
            <person name="Arakawa T."/>
            <person name="Iida J."/>
            <person name="Imamura K."/>
            <person name="Itoh M."/>
            <person name="Kato T."/>
            <person name="Kawaji H."/>
            <person name="Kawagashira N."/>
            <person name="Kawashima T."/>
            <person name="Kojima M."/>
            <person name="Kondo S."/>
            <person name="Konno H."/>
            <person name="Nakano K."/>
            <person name="Ninomiya N."/>
            <person name="Nishio T."/>
            <person name="Okada M."/>
            <person name="Plessy C."/>
            <person name="Shibata K."/>
            <person name="Shiraki T."/>
            <person name="Suzuki S."/>
            <person name="Tagami M."/>
            <person name="Waki K."/>
            <person name="Watahiki A."/>
            <person name="Okamura-Oho Y."/>
            <person name="Suzuki H."/>
            <person name="Kawai J."/>
            <person name="Hayashizaki Y."/>
        </authorList>
    </citation>
    <scope>NUCLEOTIDE SEQUENCE [LARGE SCALE MRNA]</scope>
    <source>
        <strain>C57BL/6J</strain>
        <strain>NOD</strain>
        <tissue>Embryo</tissue>
        <tissue>Spleen</tissue>
    </source>
</reference>
<reference key="3">
    <citation type="journal article" date="2004" name="Genome Res.">
        <title>The status, quality, and expansion of the NIH full-length cDNA project: the Mammalian Gene Collection (MGC).</title>
        <authorList>
            <consortium name="The MGC Project Team"/>
        </authorList>
    </citation>
    <scope>NUCLEOTIDE SEQUENCE [LARGE SCALE MRNA]</scope>
    <source>
        <strain>FVB/N</strain>
        <tissue>Mammary tumor</tissue>
        <tissue>Salivary gland</tissue>
    </source>
</reference>
<reference key="4">
    <citation type="journal article" date="2006" name="FEBS Lett.">
        <title>Mammalian mitochondrial nitric oxide synthase: characterization of a novel candidate.</title>
        <authorList>
            <person name="Zemojtel T."/>
            <person name="Kolanczyk M."/>
            <person name="Kossler N."/>
            <person name="Stricker S."/>
            <person name="Lurz R."/>
            <person name="Mikula I."/>
            <person name="Duchniewicz M."/>
            <person name="Schuelke M."/>
            <person name="Ghafourifar P."/>
            <person name="Martasek P."/>
            <person name="Vingron M."/>
            <person name="Mundlos S."/>
        </authorList>
    </citation>
    <scope>SUBCELLULAR LOCATION</scope>
    <scope>TISSUE SPECIFICITY</scope>
    <scope>DEVELOPMENTAL STAGE</scope>
</reference>
<reference key="5">
    <citation type="journal article" date="2008" name="Life Sci.">
        <title>mAtNOS1 induces apoptosis of human mammary adenocarcinoma cells.</title>
        <authorList>
            <person name="Parihar A."/>
            <person name="Parihar M.S."/>
            <person name="Chen Z."/>
            <person name="Ghafourifar P."/>
        </authorList>
    </citation>
    <scope>FUNCTION</scope>
    <scope>SUBUNIT</scope>
    <scope>SUBCELLULAR LOCATION</scope>
    <scope>MUTAGENESIS OF LYS-353</scope>
</reference>
<reference key="6">
    <citation type="journal article" date="2011" name="Mol. Biol. Cell">
        <title>NOA1 is an essential GTPase required for mitochondrial protein synthesis.</title>
        <authorList>
            <person name="Kolanczyk M."/>
            <person name="Pech M."/>
            <person name="Zemojtel T."/>
            <person name="Yamamoto H."/>
            <person name="Mikula I."/>
            <person name="Calvaruso M.A."/>
            <person name="van den Brand M."/>
            <person name="Richter R."/>
            <person name="Fischer B."/>
            <person name="Ritz A."/>
            <person name="Kossler N."/>
            <person name="Thurisch B."/>
            <person name="Spoerle R."/>
            <person name="Smeitink J."/>
            <person name="Kornak U."/>
            <person name="Chan D."/>
            <person name="Vingron M."/>
            <person name="Martasek P."/>
            <person name="Lightowlers R.N."/>
            <person name="Nijtmans L."/>
            <person name="Schuelke M."/>
            <person name="Nierhaus K.H."/>
            <person name="Mundlos S."/>
        </authorList>
    </citation>
    <scope>FUNCTION</scope>
    <scope>DISRUPTION PHENOTYPE</scope>
</reference>